<name>CBPYA_ASPCL</name>
<comment type="function">
    <text evidence="1">Vacuolar carboxypeptidase involved in degradation of small peptides. Digests preferentially peptides containing an aliphatic or hydrophobic residue in P1' position, as well as methionine, leucine or phenylalanine in P1 position of ester substrate (By similarity).</text>
</comment>
<comment type="catalytic activity">
    <reaction evidence="3">
        <text>Release of a C-terminal amino acid with broad specificity.</text>
        <dbReference type="EC" id="3.4.16.5"/>
    </reaction>
</comment>
<comment type="subcellular location">
    <subcellularLocation>
        <location evidence="1">Vacuole</location>
    </subcellularLocation>
</comment>
<comment type="similarity">
    <text evidence="4">Belongs to the peptidase S10 family.</text>
</comment>
<accession>A1CUJ5</accession>
<reference key="1">
    <citation type="journal article" date="2008" name="PLoS Genet.">
        <title>Genomic islands in the pathogenic filamentous fungus Aspergillus fumigatus.</title>
        <authorList>
            <person name="Fedorova N.D."/>
            <person name="Khaldi N."/>
            <person name="Joardar V.S."/>
            <person name="Maiti R."/>
            <person name="Amedeo P."/>
            <person name="Anderson M.J."/>
            <person name="Crabtree J."/>
            <person name="Silva J.C."/>
            <person name="Badger J.H."/>
            <person name="Albarraq A."/>
            <person name="Angiuoli S."/>
            <person name="Bussey H."/>
            <person name="Bowyer P."/>
            <person name="Cotty P.J."/>
            <person name="Dyer P.S."/>
            <person name="Egan A."/>
            <person name="Galens K."/>
            <person name="Fraser-Liggett C.M."/>
            <person name="Haas B.J."/>
            <person name="Inman J.M."/>
            <person name="Kent R."/>
            <person name="Lemieux S."/>
            <person name="Malavazi I."/>
            <person name="Orvis J."/>
            <person name="Roemer T."/>
            <person name="Ronning C.M."/>
            <person name="Sundaram J.P."/>
            <person name="Sutton G."/>
            <person name="Turner G."/>
            <person name="Venter J.C."/>
            <person name="White O.R."/>
            <person name="Whitty B.R."/>
            <person name="Youngman P."/>
            <person name="Wolfe K.H."/>
            <person name="Goldman G.H."/>
            <person name="Wortman J.R."/>
            <person name="Jiang B."/>
            <person name="Denning D.W."/>
            <person name="Nierman W.C."/>
        </authorList>
    </citation>
    <scope>NUCLEOTIDE SEQUENCE [LARGE SCALE GENOMIC DNA]</scope>
    <source>
        <strain>ATCC 1007 / CBS 513.65 / DSM 816 / NCTC 3887 / NRRL 1 / QM 1276 / 107</strain>
    </source>
</reference>
<gene>
    <name type="primary">cpyA</name>
    <name type="synonym">cpy</name>
    <name type="ORF">ACLA_086840</name>
</gene>
<feature type="signal peptide" evidence="2">
    <location>
        <begin position="1"/>
        <end position="17"/>
    </location>
</feature>
<feature type="propeptide" id="PRO_0000407430" evidence="1">
    <location>
        <begin position="18"/>
        <end position="124"/>
    </location>
</feature>
<feature type="chain" id="PRO_0000407431" description="Carboxypeptidase Y homolog A">
    <location>
        <begin position="125"/>
        <end position="543"/>
    </location>
</feature>
<feature type="active site" evidence="3">
    <location>
        <position position="266"/>
    </location>
</feature>
<feature type="active site" evidence="3">
    <location>
        <position position="458"/>
    </location>
</feature>
<feature type="active site" evidence="3">
    <location>
        <position position="520"/>
    </location>
</feature>
<feature type="glycosylation site" description="N-linked (GlcNAc...) asparagine" evidence="2">
    <location>
        <position position="210"/>
    </location>
</feature>
<feature type="glycosylation site" description="N-linked (GlcNAc...) asparagine" evidence="2">
    <location>
        <position position="509"/>
    </location>
</feature>
<feature type="disulfide bond" evidence="1">
    <location>
        <begin position="179"/>
        <end position="419"/>
    </location>
</feature>
<feature type="disulfide bond" evidence="1">
    <location>
        <begin position="313"/>
        <end position="327"/>
    </location>
</feature>
<feature type="disulfide bond" evidence="1">
    <location>
        <begin position="337"/>
        <end position="360"/>
    </location>
</feature>
<feature type="disulfide bond" evidence="1">
    <location>
        <begin position="344"/>
        <end position="353"/>
    </location>
</feature>
<feature type="disulfide bond" evidence="1">
    <location>
        <begin position="382"/>
        <end position="389"/>
    </location>
</feature>
<sequence>MRVLPATLLVGAATAAVPPFQQILGLPKKGADTLSKPLHDFQEQLKTLSDDARRLWDEVAKHFPDSMDHNPVFSLPKKHTRRPDSHWDHIVRGADVQSVWVTGANGEKEREVDGKLEAYDLRVKTTDPGALGIDPGVKQYTGYLDDNENDKHLFYWFFESRNDPKNDPVVLWLNGGPGCSSLTGLFLELGPSSIDSKIKPVYNDFAWNSNASVIFLDQPVNVGYSYSGSAVSDTVAAGKDVYALLTLFFKQFPEYAKQDFHIAGESYAGHYIPVFASEILSHKKRNINLKSVLIGNGLTDPLTQYDHYRPMACGDGGYPAVLDEASCQSMDNALPRCKSMIESCYNTESSWVCVPASIYCNNALIGPYQRTGQNVYDVRGKCEDESNLCYKGMGYVSEYLNKREVREAVGAEVDGYDSCNFDINRNFLFHGDWMKPYHRLVPGLLEQIPVLIYAGDADFICNWLGNKAWSEALEWPGQKEYASAELEDLVIEQNEHQGKKIGQIKSHGNFTFMRLYGGGHMVPMDQPEASLEFFNRWIGGEWF</sequence>
<dbReference type="EC" id="3.4.16.5"/>
<dbReference type="EMBL" id="DS027060">
    <property type="protein sequence ID" value="EAW06982.1"/>
    <property type="molecule type" value="Genomic_DNA"/>
</dbReference>
<dbReference type="RefSeq" id="XP_001268408.1">
    <property type="nucleotide sequence ID" value="XM_001268407.1"/>
</dbReference>
<dbReference type="SMR" id="A1CUJ5"/>
<dbReference type="STRING" id="344612.A1CUJ5"/>
<dbReference type="ESTHER" id="aspcl-cbpya">
    <property type="family name" value="Carboxypeptidase_S10"/>
</dbReference>
<dbReference type="MEROPS" id="S10.001"/>
<dbReference type="GlyCosmos" id="A1CUJ5">
    <property type="glycosylation" value="2 sites, No reported glycans"/>
</dbReference>
<dbReference type="EnsemblFungi" id="EAW06982">
    <property type="protein sequence ID" value="EAW06982"/>
    <property type="gene ID" value="ACLA_086840"/>
</dbReference>
<dbReference type="GeneID" id="4700272"/>
<dbReference type="KEGG" id="act:ACLA_086840"/>
<dbReference type="VEuPathDB" id="FungiDB:ACLA_086840"/>
<dbReference type="eggNOG" id="KOG1282">
    <property type="taxonomic scope" value="Eukaryota"/>
</dbReference>
<dbReference type="HOGENOM" id="CLU_008523_10_4_1"/>
<dbReference type="OMA" id="GDWMKPF"/>
<dbReference type="OrthoDB" id="443318at2759"/>
<dbReference type="Proteomes" id="UP000006701">
    <property type="component" value="Unassembled WGS sequence"/>
</dbReference>
<dbReference type="GO" id="GO:0000324">
    <property type="term" value="C:fungal-type vacuole"/>
    <property type="evidence" value="ECO:0007669"/>
    <property type="project" value="TreeGrafter"/>
</dbReference>
<dbReference type="GO" id="GO:0004185">
    <property type="term" value="F:serine-type carboxypeptidase activity"/>
    <property type="evidence" value="ECO:0007669"/>
    <property type="project" value="UniProtKB-EC"/>
</dbReference>
<dbReference type="GO" id="GO:0006508">
    <property type="term" value="P:proteolysis"/>
    <property type="evidence" value="ECO:0007669"/>
    <property type="project" value="UniProtKB-KW"/>
</dbReference>
<dbReference type="FunFam" id="1.10.287.410:FF:000001">
    <property type="entry name" value="Carboxypeptidase Y"/>
    <property type="match status" value="1"/>
</dbReference>
<dbReference type="Gene3D" id="1.10.287.410">
    <property type="match status" value="1"/>
</dbReference>
<dbReference type="Gene3D" id="3.40.50.1820">
    <property type="entry name" value="alpha/beta hydrolase"/>
    <property type="match status" value="1"/>
</dbReference>
<dbReference type="InterPro" id="IPR029058">
    <property type="entry name" value="AB_hydrolase_fold"/>
</dbReference>
<dbReference type="InterPro" id="IPR001563">
    <property type="entry name" value="Peptidase_S10"/>
</dbReference>
<dbReference type="InterPro" id="IPR008442">
    <property type="entry name" value="Propeptide_carboxypepY"/>
</dbReference>
<dbReference type="InterPro" id="IPR018202">
    <property type="entry name" value="Ser_caboxypep_ser_AS"/>
</dbReference>
<dbReference type="PANTHER" id="PTHR11802:SF113">
    <property type="entry name" value="SERINE CARBOXYPEPTIDASE CTSA-4.1"/>
    <property type="match status" value="1"/>
</dbReference>
<dbReference type="PANTHER" id="PTHR11802">
    <property type="entry name" value="SERINE PROTEASE FAMILY S10 SERINE CARBOXYPEPTIDASE"/>
    <property type="match status" value="1"/>
</dbReference>
<dbReference type="Pfam" id="PF05388">
    <property type="entry name" value="Carbpep_Y_N"/>
    <property type="match status" value="1"/>
</dbReference>
<dbReference type="Pfam" id="PF00450">
    <property type="entry name" value="Peptidase_S10"/>
    <property type="match status" value="1"/>
</dbReference>
<dbReference type="PRINTS" id="PR00724">
    <property type="entry name" value="CRBOXYPTASEC"/>
</dbReference>
<dbReference type="SUPFAM" id="SSF53474">
    <property type="entry name" value="alpha/beta-Hydrolases"/>
    <property type="match status" value="1"/>
</dbReference>
<dbReference type="PROSITE" id="PS00131">
    <property type="entry name" value="CARBOXYPEPT_SER_SER"/>
    <property type="match status" value="1"/>
</dbReference>
<proteinExistence type="inferred from homology"/>
<organism>
    <name type="scientific">Aspergillus clavatus (strain ATCC 1007 / CBS 513.65 / DSM 816 / NCTC 3887 / NRRL 1 / QM 1276 / 107)</name>
    <dbReference type="NCBI Taxonomy" id="344612"/>
    <lineage>
        <taxon>Eukaryota</taxon>
        <taxon>Fungi</taxon>
        <taxon>Dikarya</taxon>
        <taxon>Ascomycota</taxon>
        <taxon>Pezizomycotina</taxon>
        <taxon>Eurotiomycetes</taxon>
        <taxon>Eurotiomycetidae</taxon>
        <taxon>Eurotiales</taxon>
        <taxon>Aspergillaceae</taxon>
        <taxon>Aspergillus</taxon>
        <taxon>Aspergillus subgen. Fumigati</taxon>
    </lineage>
</organism>
<evidence type="ECO:0000250" key="1"/>
<evidence type="ECO:0000255" key="2"/>
<evidence type="ECO:0000255" key="3">
    <source>
        <dbReference type="PROSITE-ProRule" id="PRU10074"/>
    </source>
</evidence>
<evidence type="ECO:0000305" key="4"/>
<protein>
    <recommendedName>
        <fullName>Carboxypeptidase Y homolog A</fullName>
        <ecNumber>3.4.16.5</ecNumber>
    </recommendedName>
</protein>
<keyword id="KW-0121">Carboxypeptidase</keyword>
<keyword id="KW-1015">Disulfide bond</keyword>
<keyword id="KW-0325">Glycoprotein</keyword>
<keyword id="KW-0378">Hydrolase</keyword>
<keyword id="KW-0645">Protease</keyword>
<keyword id="KW-1185">Reference proteome</keyword>
<keyword id="KW-0732">Signal</keyword>
<keyword id="KW-0926">Vacuole</keyword>
<keyword id="KW-0865">Zymogen</keyword>